<feature type="chain" id="PRO_1000011122" description="Phosphopantetheine adenylyltransferase">
    <location>
        <begin position="1"/>
        <end position="167"/>
    </location>
</feature>
<feature type="binding site" evidence="1">
    <location>
        <begin position="9"/>
        <end position="10"/>
    </location>
    <ligand>
        <name>ATP</name>
        <dbReference type="ChEBI" id="CHEBI:30616"/>
    </ligand>
</feature>
<feature type="binding site" evidence="1">
    <location>
        <position position="9"/>
    </location>
    <ligand>
        <name>substrate</name>
    </ligand>
</feature>
<feature type="binding site" evidence="1">
    <location>
        <position position="17"/>
    </location>
    <ligand>
        <name>ATP</name>
        <dbReference type="ChEBI" id="CHEBI:30616"/>
    </ligand>
</feature>
<feature type="binding site" evidence="1">
    <location>
        <position position="41"/>
    </location>
    <ligand>
        <name>substrate</name>
    </ligand>
</feature>
<feature type="binding site" evidence="1">
    <location>
        <position position="73"/>
    </location>
    <ligand>
        <name>substrate</name>
    </ligand>
</feature>
<feature type="binding site" evidence="1">
    <location>
        <position position="87"/>
    </location>
    <ligand>
        <name>substrate</name>
    </ligand>
</feature>
<feature type="binding site" evidence="1">
    <location>
        <begin position="88"/>
        <end position="90"/>
    </location>
    <ligand>
        <name>ATP</name>
        <dbReference type="ChEBI" id="CHEBI:30616"/>
    </ligand>
</feature>
<feature type="binding site" evidence="1">
    <location>
        <position position="98"/>
    </location>
    <ligand>
        <name>ATP</name>
        <dbReference type="ChEBI" id="CHEBI:30616"/>
    </ligand>
</feature>
<feature type="binding site" evidence="1">
    <location>
        <begin position="123"/>
        <end position="129"/>
    </location>
    <ligand>
        <name>ATP</name>
        <dbReference type="ChEBI" id="CHEBI:30616"/>
    </ligand>
</feature>
<feature type="site" description="Transition state stabilizer" evidence="1">
    <location>
        <position position="17"/>
    </location>
</feature>
<organism>
    <name type="scientific">Chromohalobacter salexigens (strain ATCC BAA-138 / DSM 3043 / CIP 106854 / NCIMB 13768 / 1H11)</name>
    <dbReference type="NCBI Taxonomy" id="290398"/>
    <lineage>
        <taxon>Bacteria</taxon>
        <taxon>Pseudomonadati</taxon>
        <taxon>Pseudomonadota</taxon>
        <taxon>Gammaproteobacteria</taxon>
        <taxon>Oceanospirillales</taxon>
        <taxon>Halomonadaceae</taxon>
        <taxon>Chromohalobacter</taxon>
    </lineage>
</organism>
<reference key="1">
    <citation type="journal article" date="2011" name="Stand. Genomic Sci.">
        <title>Complete genome sequence of the halophilic and highly halotolerant Chromohalobacter salexigens type strain (1H11(T)).</title>
        <authorList>
            <person name="Copeland A."/>
            <person name="O'Connor K."/>
            <person name="Lucas S."/>
            <person name="Lapidus A."/>
            <person name="Berry K.W."/>
            <person name="Detter J.C."/>
            <person name="Del Rio T.G."/>
            <person name="Hammon N."/>
            <person name="Dalin E."/>
            <person name="Tice H."/>
            <person name="Pitluck S."/>
            <person name="Bruce D."/>
            <person name="Goodwin L."/>
            <person name="Han C."/>
            <person name="Tapia R."/>
            <person name="Saunders E."/>
            <person name="Schmutz J."/>
            <person name="Brettin T."/>
            <person name="Larimer F."/>
            <person name="Land M."/>
            <person name="Hauser L."/>
            <person name="Vargas C."/>
            <person name="Nieto J.J."/>
            <person name="Kyrpides N.C."/>
            <person name="Ivanova N."/>
            <person name="Goker M."/>
            <person name="Klenk H.P."/>
            <person name="Csonka L.N."/>
            <person name="Woyke T."/>
        </authorList>
    </citation>
    <scope>NUCLEOTIDE SEQUENCE [LARGE SCALE GENOMIC DNA]</scope>
    <source>
        <strain>ATCC BAA-138 / DSM 3043 / CIP 106854 / NCIMB 13768 / 1H11</strain>
    </source>
</reference>
<sequence length="167" mass="18414">MNIVVYPGTFDPVTNGHYDLIERASRMFDKVVVAVAASPRKQPTLSLETRVALIEEVTADLDNVTVTGFSCLLTQLLAQQNARIILRGLRAVSDFEYELQLANMNRAQAPDVESLFLTPEVENSYISSTIVREIARLGGDVSKLVHPCVVDALSRHFAQDPSSPKTQ</sequence>
<evidence type="ECO:0000255" key="1">
    <source>
        <dbReference type="HAMAP-Rule" id="MF_00151"/>
    </source>
</evidence>
<proteinExistence type="inferred from homology"/>
<accession>Q1QTC8</accession>
<name>COAD_CHRSD</name>
<dbReference type="EC" id="2.7.7.3" evidence="1"/>
<dbReference type="EMBL" id="CP000285">
    <property type="protein sequence ID" value="ABE60280.1"/>
    <property type="molecule type" value="Genomic_DNA"/>
</dbReference>
<dbReference type="RefSeq" id="WP_011508226.1">
    <property type="nucleotide sequence ID" value="NC_007963.1"/>
</dbReference>
<dbReference type="SMR" id="Q1QTC8"/>
<dbReference type="STRING" id="290398.Csal_2935"/>
<dbReference type="GeneID" id="95335625"/>
<dbReference type="KEGG" id="csa:Csal_2935"/>
<dbReference type="eggNOG" id="COG0669">
    <property type="taxonomic scope" value="Bacteria"/>
</dbReference>
<dbReference type="HOGENOM" id="CLU_100149_0_1_6"/>
<dbReference type="OrthoDB" id="9806661at2"/>
<dbReference type="UniPathway" id="UPA00241">
    <property type="reaction ID" value="UER00355"/>
</dbReference>
<dbReference type="Proteomes" id="UP000000239">
    <property type="component" value="Chromosome"/>
</dbReference>
<dbReference type="GO" id="GO:0005737">
    <property type="term" value="C:cytoplasm"/>
    <property type="evidence" value="ECO:0007669"/>
    <property type="project" value="UniProtKB-SubCell"/>
</dbReference>
<dbReference type="GO" id="GO:0005524">
    <property type="term" value="F:ATP binding"/>
    <property type="evidence" value="ECO:0007669"/>
    <property type="project" value="UniProtKB-KW"/>
</dbReference>
<dbReference type="GO" id="GO:0004595">
    <property type="term" value="F:pantetheine-phosphate adenylyltransferase activity"/>
    <property type="evidence" value="ECO:0007669"/>
    <property type="project" value="UniProtKB-UniRule"/>
</dbReference>
<dbReference type="GO" id="GO:0015937">
    <property type="term" value="P:coenzyme A biosynthetic process"/>
    <property type="evidence" value="ECO:0007669"/>
    <property type="project" value="UniProtKB-UniRule"/>
</dbReference>
<dbReference type="CDD" id="cd02163">
    <property type="entry name" value="PPAT"/>
    <property type="match status" value="1"/>
</dbReference>
<dbReference type="Gene3D" id="3.40.50.620">
    <property type="entry name" value="HUPs"/>
    <property type="match status" value="1"/>
</dbReference>
<dbReference type="HAMAP" id="MF_00151">
    <property type="entry name" value="PPAT_bact"/>
    <property type="match status" value="1"/>
</dbReference>
<dbReference type="InterPro" id="IPR004821">
    <property type="entry name" value="Cyt_trans-like"/>
</dbReference>
<dbReference type="InterPro" id="IPR001980">
    <property type="entry name" value="PPAT"/>
</dbReference>
<dbReference type="InterPro" id="IPR014729">
    <property type="entry name" value="Rossmann-like_a/b/a_fold"/>
</dbReference>
<dbReference type="NCBIfam" id="TIGR01510">
    <property type="entry name" value="coaD_prev_kdtB"/>
    <property type="match status" value="1"/>
</dbReference>
<dbReference type="NCBIfam" id="TIGR00125">
    <property type="entry name" value="cyt_tran_rel"/>
    <property type="match status" value="1"/>
</dbReference>
<dbReference type="PANTHER" id="PTHR21342">
    <property type="entry name" value="PHOSPHOPANTETHEINE ADENYLYLTRANSFERASE"/>
    <property type="match status" value="1"/>
</dbReference>
<dbReference type="PANTHER" id="PTHR21342:SF1">
    <property type="entry name" value="PHOSPHOPANTETHEINE ADENYLYLTRANSFERASE"/>
    <property type="match status" value="1"/>
</dbReference>
<dbReference type="Pfam" id="PF01467">
    <property type="entry name" value="CTP_transf_like"/>
    <property type="match status" value="1"/>
</dbReference>
<dbReference type="PRINTS" id="PR01020">
    <property type="entry name" value="LPSBIOSNTHSS"/>
</dbReference>
<dbReference type="SUPFAM" id="SSF52374">
    <property type="entry name" value="Nucleotidylyl transferase"/>
    <property type="match status" value="1"/>
</dbReference>
<comment type="function">
    <text evidence="1">Reversibly transfers an adenylyl group from ATP to 4'-phosphopantetheine, yielding dephospho-CoA (dPCoA) and pyrophosphate.</text>
</comment>
<comment type="catalytic activity">
    <reaction evidence="1">
        <text>(R)-4'-phosphopantetheine + ATP + H(+) = 3'-dephospho-CoA + diphosphate</text>
        <dbReference type="Rhea" id="RHEA:19801"/>
        <dbReference type="ChEBI" id="CHEBI:15378"/>
        <dbReference type="ChEBI" id="CHEBI:30616"/>
        <dbReference type="ChEBI" id="CHEBI:33019"/>
        <dbReference type="ChEBI" id="CHEBI:57328"/>
        <dbReference type="ChEBI" id="CHEBI:61723"/>
        <dbReference type="EC" id="2.7.7.3"/>
    </reaction>
</comment>
<comment type="cofactor">
    <cofactor evidence="1">
        <name>Mg(2+)</name>
        <dbReference type="ChEBI" id="CHEBI:18420"/>
    </cofactor>
</comment>
<comment type="pathway">
    <text evidence="1">Cofactor biosynthesis; coenzyme A biosynthesis; CoA from (R)-pantothenate: step 4/5.</text>
</comment>
<comment type="subunit">
    <text evidence="1">Homohexamer.</text>
</comment>
<comment type="subcellular location">
    <subcellularLocation>
        <location evidence="1">Cytoplasm</location>
    </subcellularLocation>
</comment>
<comment type="similarity">
    <text evidence="1">Belongs to the bacterial CoaD family.</text>
</comment>
<protein>
    <recommendedName>
        <fullName evidence="1">Phosphopantetheine adenylyltransferase</fullName>
        <ecNumber evidence="1">2.7.7.3</ecNumber>
    </recommendedName>
    <alternativeName>
        <fullName evidence="1">Dephospho-CoA pyrophosphorylase</fullName>
    </alternativeName>
    <alternativeName>
        <fullName evidence="1">Pantetheine-phosphate adenylyltransferase</fullName>
        <shortName evidence="1">PPAT</shortName>
    </alternativeName>
</protein>
<gene>
    <name evidence="1" type="primary">coaD</name>
    <name type="ordered locus">Csal_2935</name>
</gene>
<keyword id="KW-0067">ATP-binding</keyword>
<keyword id="KW-0173">Coenzyme A biosynthesis</keyword>
<keyword id="KW-0963">Cytoplasm</keyword>
<keyword id="KW-0460">Magnesium</keyword>
<keyword id="KW-0547">Nucleotide-binding</keyword>
<keyword id="KW-0548">Nucleotidyltransferase</keyword>
<keyword id="KW-1185">Reference proteome</keyword>
<keyword id="KW-0808">Transferase</keyword>